<dbReference type="EC" id="2.5.1.61" evidence="1"/>
<dbReference type="EMBL" id="CT573326">
    <property type="protein sequence ID" value="CAK17970.1"/>
    <property type="molecule type" value="Genomic_DNA"/>
</dbReference>
<dbReference type="RefSeq" id="WP_011536328.1">
    <property type="nucleotide sequence ID" value="NC_008027.1"/>
</dbReference>
<dbReference type="SMR" id="Q1I316"/>
<dbReference type="STRING" id="384676.PSEEN5353"/>
<dbReference type="GeneID" id="32808266"/>
<dbReference type="KEGG" id="pen:PSEEN5353"/>
<dbReference type="eggNOG" id="COG0181">
    <property type="taxonomic scope" value="Bacteria"/>
</dbReference>
<dbReference type="HOGENOM" id="CLU_019704_0_2_6"/>
<dbReference type="OrthoDB" id="9810298at2"/>
<dbReference type="UniPathway" id="UPA00251">
    <property type="reaction ID" value="UER00319"/>
</dbReference>
<dbReference type="Proteomes" id="UP000000658">
    <property type="component" value="Chromosome"/>
</dbReference>
<dbReference type="GO" id="GO:0005737">
    <property type="term" value="C:cytoplasm"/>
    <property type="evidence" value="ECO:0007669"/>
    <property type="project" value="TreeGrafter"/>
</dbReference>
<dbReference type="GO" id="GO:0004418">
    <property type="term" value="F:hydroxymethylbilane synthase activity"/>
    <property type="evidence" value="ECO:0007669"/>
    <property type="project" value="UniProtKB-UniRule"/>
</dbReference>
<dbReference type="GO" id="GO:0006782">
    <property type="term" value="P:protoporphyrinogen IX biosynthetic process"/>
    <property type="evidence" value="ECO:0007669"/>
    <property type="project" value="UniProtKB-UniRule"/>
</dbReference>
<dbReference type="CDD" id="cd13646">
    <property type="entry name" value="PBP2_EcHMBS_like"/>
    <property type="match status" value="1"/>
</dbReference>
<dbReference type="FunFam" id="3.30.160.40:FF:000002">
    <property type="entry name" value="Porphobilinogen deaminase"/>
    <property type="match status" value="1"/>
</dbReference>
<dbReference type="FunFam" id="3.40.190.10:FF:000004">
    <property type="entry name" value="Porphobilinogen deaminase"/>
    <property type="match status" value="1"/>
</dbReference>
<dbReference type="FunFam" id="3.40.190.10:FF:000005">
    <property type="entry name" value="Porphobilinogen deaminase"/>
    <property type="match status" value="1"/>
</dbReference>
<dbReference type="Gene3D" id="3.40.190.10">
    <property type="entry name" value="Periplasmic binding protein-like II"/>
    <property type="match status" value="2"/>
</dbReference>
<dbReference type="Gene3D" id="3.30.160.40">
    <property type="entry name" value="Porphobilinogen deaminase, C-terminal domain"/>
    <property type="match status" value="1"/>
</dbReference>
<dbReference type="HAMAP" id="MF_00260">
    <property type="entry name" value="Porphobil_deam"/>
    <property type="match status" value="1"/>
</dbReference>
<dbReference type="InterPro" id="IPR000860">
    <property type="entry name" value="HemC"/>
</dbReference>
<dbReference type="InterPro" id="IPR022419">
    <property type="entry name" value="Porphobilin_deaminase_cofac_BS"/>
</dbReference>
<dbReference type="InterPro" id="IPR022417">
    <property type="entry name" value="Porphobilin_deaminase_N"/>
</dbReference>
<dbReference type="InterPro" id="IPR022418">
    <property type="entry name" value="Porphobilinogen_deaminase_C"/>
</dbReference>
<dbReference type="InterPro" id="IPR036803">
    <property type="entry name" value="Porphobilinogen_deaminase_C_sf"/>
</dbReference>
<dbReference type="NCBIfam" id="TIGR00212">
    <property type="entry name" value="hemC"/>
    <property type="match status" value="1"/>
</dbReference>
<dbReference type="PANTHER" id="PTHR11557">
    <property type="entry name" value="PORPHOBILINOGEN DEAMINASE"/>
    <property type="match status" value="1"/>
</dbReference>
<dbReference type="PANTHER" id="PTHR11557:SF0">
    <property type="entry name" value="PORPHOBILINOGEN DEAMINASE"/>
    <property type="match status" value="1"/>
</dbReference>
<dbReference type="Pfam" id="PF01379">
    <property type="entry name" value="Porphobil_deam"/>
    <property type="match status" value="1"/>
</dbReference>
<dbReference type="Pfam" id="PF03900">
    <property type="entry name" value="Porphobil_deamC"/>
    <property type="match status" value="1"/>
</dbReference>
<dbReference type="PIRSF" id="PIRSF001438">
    <property type="entry name" value="4pyrrol_synth_OHMeBilane_synth"/>
    <property type="match status" value="1"/>
</dbReference>
<dbReference type="PRINTS" id="PR00151">
    <property type="entry name" value="PORPHBDMNASE"/>
</dbReference>
<dbReference type="SUPFAM" id="SSF53850">
    <property type="entry name" value="Periplasmic binding protein-like II"/>
    <property type="match status" value="1"/>
</dbReference>
<dbReference type="SUPFAM" id="SSF54782">
    <property type="entry name" value="Porphobilinogen deaminase (hydroxymethylbilane synthase), C-terminal domain"/>
    <property type="match status" value="1"/>
</dbReference>
<dbReference type="PROSITE" id="PS00533">
    <property type="entry name" value="PORPHOBILINOGEN_DEAM"/>
    <property type="match status" value="1"/>
</dbReference>
<evidence type="ECO:0000255" key="1">
    <source>
        <dbReference type="HAMAP-Rule" id="MF_00260"/>
    </source>
</evidence>
<accession>Q1I316</accession>
<comment type="function">
    <text evidence="1">Tetrapolymerization of the monopyrrole PBG into the hydroxymethylbilane pre-uroporphyrinogen in several discrete steps.</text>
</comment>
<comment type="catalytic activity">
    <reaction evidence="1">
        <text>4 porphobilinogen + H2O = hydroxymethylbilane + 4 NH4(+)</text>
        <dbReference type="Rhea" id="RHEA:13185"/>
        <dbReference type="ChEBI" id="CHEBI:15377"/>
        <dbReference type="ChEBI" id="CHEBI:28938"/>
        <dbReference type="ChEBI" id="CHEBI:57845"/>
        <dbReference type="ChEBI" id="CHEBI:58126"/>
        <dbReference type="EC" id="2.5.1.61"/>
    </reaction>
</comment>
<comment type="cofactor">
    <cofactor evidence="1">
        <name>dipyrromethane</name>
        <dbReference type="ChEBI" id="CHEBI:60342"/>
    </cofactor>
    <text evidence="1">Binds 1 dipyrromethane group covalently.</text>
</comment>
<comment type="pathway">
    <text evidence="1">Porphyrin-containing compound metabolism; protoporphyrin-IX biosynthesis; coproporphyrinogen-III from 5-aminolevulinate: step 2/4.</text>
</comment>
<comment type="subunit">
    <text evidence="1">Monomer.</text>
</comment>
<comment type="miscellaneous">
    <text evidence="1">The porphobilinogen subunits are added to the dipyrromethane group.</text>
</comment>
<comment type="similarity">
    <text evidence="1">Belongs to the HMBS family.</text>
</comment>
<gene>
    <name evidence="1" type="primary">hemC</name>
    <name type="ordered locus">PSEEN5353</name>
</gene>
<protein>
    <recommendedName>
        <fullName evidence="1">Porphobilinogen deaminase</fullName>
        <shortName evidence="1">PBG</shortName>
        <ecNumber evidence="1">2.5.1.61</ecNumber>
    </recommendedName>
    <alternativeName>
        <fullName evidence="1">Hydroxymethylbilane synthase</fullName>
        <shortName evidence="1">HMBS</shortName>
    </alternativeName>
    <alternativeName>
        <fullName evidence="1">Pre-uroporphyrinogen synthase</fullName>
    </alternativeName>
</protein>
<proteinExistence type="inferred from homology"/>
<sequence length="313" mass="33442">MSTREIRIATRKSALALWQAEYVKARLEQAHPGLQVSLVPMVSRGDKLLDAPLAKIGGKGLFVKELETALLDNEADIAVHSMKDVPMDFPEGLGLYCICEREDPRDAFVSNTFKSLEALPAGSVVGTSSLRRQAQLLARRPDLEIRFLRGNVNTRLAKLDAGEYDAIILAAAGLVRLGFEDRITSTISVDDSLPAGGQGAVGIECRSADSEIHALLAPLHHIDTADRVVAERALNKRLNGGCQVPIACYAVLEGDQLWLRGLVGQPSGGTLLVADARAPRASAEALGVQVAEDLLSQGAEAILKEVYGEAGHP</sequence>
<keyword id="KW-0627">Porphyrin biosynthesis</keyword>
<keyword id="KW-0808">Transferase</keyword>
<name>HEM3_PSEE4</name>
<organism>
    <name type="scientific">Pseudomonas entomophila (strain L48)</name>
    <dbReference type="NCBI Taxonomy" id="384676"/>
    <lineage>
        <taxon>Bacteria</taxon>
        <taxon>Pseudomonadati</taxon>
        <taxon>Pseudomonadota</taxon>
        <taxon>Gammaproteobacteria</taxon>
        <taxon>Pseudomonadales</taxon>
        <taxon>Pseudomonadaceae</taxon>
        <taxon>Pseudomonas</taxon>
    </lineage>
</organism>
<reference key="1">
    <citation type="journal article" date="2006" name="Nat. Biotechnol.">
        <title>Complete genome sequence of the entomopathogenic and metabolically versatile soil bacterium Pseudomonas entomophila.</title>
        <authorList>
            <person name="Vodovar N."/>
            <person name="Vallenet D."/>
            <person name="Cruveiller S."/>
            <person name="Rouy Z."/>
            <person name="Barbe V."/>
            <person name="Acosta C."/>
            <person name="Cattolico L."/>
            <person name="Jubin C."/>
            <person name="Lajus A."/>
            <person name="Segurens B."/>
            <person name="Vacherie B."/>
            <person name="Wincker P."/>
            <person name="Weissenbach J."/>
            <person name="Lemaitre B."/>
            <person name="Medigue C."/>
            <person name="Boccard F."/>
        </authorList>
    </citation>
    <scope>NUCLEOTIDE SEQUENCE [LARGE SCALE GENOMIC DNA]</scope>
    <source>
        <strain>L48</strain>
    </source>
</reference>
<feature type="chain" id="PRO_0000304266" description="Porphobilinogen deaminase">
    <location>
        <begin position="1"/>
        <end position="313"/>
    </location>
</feature>
<feature type="modified residue" description="S-(dipyrrolylmethanemethyl)cysteine" evidence="1">
    <location>
        <position position="242"/>
    </location>
</feature>